<sequence>MEEMDDFTVRRGEREDITGAAGPPEERPLDPAAFEEDDEPTLRPRTLDEFVGQERLKENLRIFVEAAKQRGEPLDHMLLAGPPGLGKTSLCRILAAEMGVQLHPTSGPSLERAGDMAAILTSLEEGDFLFIDEIHRLNRQIEEVLYPAMEDFAIDIVLGQGPSARTIRMDLPRFTLVGATTRTGLMTKPLLDRFGFSARLDYYEPHELEKIVVRNARILGVPITEGGARQLARRSRGTPRVANRLLKRVRDYAQVVGDGTIDEETANAALEMQGVDHLGLDRTDREYLSLIIEKFDGGPVGVGTLSVALGEARDTVEDVYEPYLLQSGLIQRTSRGRVATRHAYAHLGFPVRDGG</sequence>
<accession>Q1AWE0</accession>
<name>RUVB_RUBXD</name>
<proteinExistence type="inferred from homology"/>
<reference key="1">
    <citation type="submission" date="2006-06" db="EMBL/GenBank/DDBJ databases">
        <title>Complete sequence of Rubrobacter xylanophilus DSM 9941.</title>
        <authorList>
            <consortium name="US DOE Joint Genome Institute"/>
            <person name="Copeland A."/>
            <person name="Lucas S."/>
            <person name="Lapidus A."/>
            <person name="Barry K."/>
            <person name="Detter J.C."/>
            <person name="Glavina del Rio T."/>
            <person name="Hammon N."/>
            <person name="Israni S."/>
            <person name="Dalin E."/>
            <person name="Tice H."/>
            <person name="Pitluck S."/>
            <person name="Munk A.C."/>
            <person name="Brettin T."/>
            <person name="Bruce D."/>
            <person name="Han C."/>
            <person name="Tapia R."/>
            <person name="Gilna P."/>
            <person name="Schmutz J."/>
            <person name="Larimer F."/>
            <person name="Land M."/>
            <person name="Hauser L."/>
            <person name="Kyrpides N."/>
            <person name="Lykidis A."/>
            <person name="da Costa M.S."/>
            <person name="Rainey F.A."/>
            <person name="Empadinhas N."/>
            <person name="Jolivet E."/>
            <person name="Battista J.R."/>
            <person name="Richardson P."/>
        </authorList>
    </citation>
    <scope>NUCLEOTIDE SEQUENCE [LARGE SCALE GENOMIC DNA]</scope>
    <source>
        <strain>DSM 9941 / JCM 11954 / NBRC 16129 / PRD-1</strain>
    </source>
</reference>
<dbReference type="EC" id="3.6.4.-" evidence="1"/>
<dbReference type="EMBL" id="CP000386">
    <property type="protein sequence ID" value="ABG04288.1"/>
    <property type="molecule type" value="Genomic_DNA"/>
</dbReference>
<dbReference type="RefSeq" id="WP_011564305.1">
    <property type="nucleotide sequence ID" value="NC_008148.1"/>
</dbReference>
<dbReference type="SMR" id="Q1AWE0"/>
<dbReference type="STRING" id="266117.Rxyl_1324"/>
<dbReference type="KEGG" id="rxy:Rxyl_1324"/>
<dbReference type="eggNOG" id="COG2255">
    <property type="taxonomic scope" value="Bacteria"/>
</dbReference>
<dbReference type="HOGENOM" id="CLU_055599_1_0_11"/>
<dbReference type="OrthoDB" id="9804478at2"/>
<dbReference type="PhylomeDB" id="Q1AWE0"/>
<dbReference type="Proteomes" id="UP000006637">
    <property type="component" value="Chromosome"/>
</dbReference>
<dbReference type="GO" id="GO:0005737">
    <property type="term" value="C:cytoplasm"/>
    <property type="evidence" value="ECO:0007669"/>
    <property type="project" value="UniProtKB-SubCell"/>
</dbReference>
<dbReference type="GO" id="GO:0048476">
    <property type="term" value="C:Holliday junction resolvase complex"/>
    <property type="evidence" value="ECO:0007669"/>
    <property type="project" value="UniProtKB-UniRule"/>
</dbReference>
<dbReference type="GO" id="GO:0005524">
    <property type="term" value="F:ATP binding"/>
    <property type="evidence" value="ECO:0007669"/>
    <property type="project" value="UniProtKB-UniRule"/>
</dbReference>
<dbReference type="GO" id="GO:0016887">
    <property type="term" value="F:ATP hydrolysis activity"/>
    <property type="evidence" value="ECO:0007669"/>
    <property type="project" value="InterPro"/>
</dbReference>
<dbReference type="GO" id="GO:0000400">
    <property type="term" value="F:four-way junction DNA binding"/>
    <property type="evidence" value="ECO:0007669"/>
    <property type="project" value="UniProtKB-UniRule"/>
</dbReference>
<dbReference type="GO" id="GO:0009378">
    <property type="term" value="F:four-way junction helicase activity"/>
    <property type="evidence" value="ECO:0007669"/>
    <property type="project" value="InterPro"/>
</dbReference>
<dbReference type="GO" id="GO:0006310">
    <property type="term" value="P:DNA recombination"/>
    <property type="evidence" value="ECO:0007669"/>
    <property type="project" value="UniProtKB-UniRule"/>
</dbReference>
<dbReference type="GO" id="GO:0006281">
    <property type="term" value="P:DNA repair"/>
    <property type="evidence" value="ECO:0007669"/>
    <property type="project" value="UniProtKB-UniRule"/>
</dbReference>
<dbReference type="CDD" id="cd00009">
    <property type="entry name" value="AAA"/>
    <property type="match status" value="1"/>
</dbReference>
<dbReference type="Gene3D" id="1.10.8.60">
    <property type="match status" value="1"/>
</dbReference>
<dbReference type="Gene3D" id="3.40.50.300">
    <property type="entry name" value="P-loop containing nucleotide triphosphate hydrolases"/>
    <property type="match status" value="1"/>
</dbReference>
<dbReference type="Gene3D" id="1.10.10.10">
    <property type="entry name" value="Winged helix-like DNA-binding domain superfamily/Winged helix DNA-binding domain"/>
    <property type="match status" value="1"/>
</dbReference>
<dbReference type="HAMAP" id="MF_00016">
    <property type="entry name" value="DNA_HJ_migration_RuvB"/>
    <property type="match status" value="1"/>
</dbReference>
<dbReference type="InterPro" id="IPR003593">
    <property type="entry name" value="AAA+_ATPase"/>
</dbReference>
<dbReference type="InterPro" id="IPR041445">
    <property type="entry name" value="AAA_lid_4"/>
</dbReference>
<dbReference type="InterPro" id="IPR004605">
    <property type="entry name" value="DNA_helicase_Holl-junc_RuvB"/>
</dbReference>
<dbReference type="InterPro" id="IPR027417">
    <property type="entry name" value="P-loop_NTPase"/>
</dbReference>
<dbReference type="InterPro" id="IPR008824">
    <property type="entry name" value="RuvB-like_N"/>
</dbReference>
<dbReference type="InterPro" id="IPR008823">
    <property type="entry name" value="RuvB_C"/>
</dbReference>
<dbReference type="InterPro" id="IPR036388">
    <property type="entry name" value="WH-like_DNA-bd_sf"/>
</dbReference>
<dbReference type="InterPro" id="IPR036390">
    <property type="entry name" value="WH_DNA-bd_sf"/>
</dbReference>
<dbReference type="NCBIfam" id="NF000868">
    <property type="entry name" value="PRK00080.1"/>
    <property type="match status" value="1"/>
</dbReference>
<dbReference type="NCBIfam" id="TIGR00635">
    <property type="entry name" value="ruvB"/>
    <property type="match status" value="1"/>
</dbReference>
<dbReference type="PANTHER" id="PTHR42848">
    <property type="match status" value="1"/>
</dbReference>
<dbReference type="PANTHER" id="PTHR42848:SF1">
    <property type="entry name" value="HOLLIDAY JUNCTION BRANCH MIGRATION COMPLEX SUBUNIT RUVB"/>
    <property type="match status" value="1"/>
</dbReference>
<dbReference type="Pfam" id="PF17864">
    <property type="entry name" value="AAA_lid_4"/>
    <property type="match status" value="1"/>
</dbReference>
<dbReference type="Pfam" id="PF05491">
    <property type="entry name" value="RuvB_C"/>
    <property type="match status" value="1"/>
</dbReference>
<dbReference type="Pfam" id="PF05496">
    <property type="entry name" value="RuvB_N"/>
    <property type="match status" value="1"/>
</dbReference>
<dbReference type="SMART" id="SM00382">
    <property type="entry name" value="AAA"/>
    <property type="match status" value="1"/>
</dbReference>
<dbReference type="SUPFAM" id="SSF52540">
    <property type="entry name" value="P-loop containing nucleoside triphosphate hydrolases"/>
    <property type="match status" value="1"/>
</dbReference>
<dbReference type="SUPFAM" id="SSF46785">
    <property type="entry name" value="Winged helix' DNA-binding domain"/>
    <property type="match status" value="1"/>
</dbReference>
<keyword id="KW-0067">ATP-binding</keyword>
<keyword id="KW-0963">Cytoplasm</keyword>
<keyword id="KW-0227">DNA damage</keyword>
<keyword id="KW-0233">DNA recombination</keyword>
<keyword id="KW-0234">DNA repair</keyword>
<keyword id="KW-0238">DNA-binding</keyword>
<keyword id="KW-0378">Hydrolase</keyword>
<keyword id="KW-0547">Nucleotide-binding</keyword>
<keyword id="KW-1185">Reference proteome</keyword>
<organism>
    <name type="scientific">Rubrobacter xylanophilus (strain DSM 9941 / JCM 11954 / NBRC 16129 / PRD-1)</name>
    <dbReference type="NCBI Taxonomy" id="266117"/>
    <lineage>
        <taxon>Bacteria</taxon>
        <taxon>Bacillati</taxon>
        <taxon>Actinomycetota</taxon>
        <taxon>Rubrobacteria</taxon>
        <taxon>Rubrobacterales</taxon>
        <taxon>Rubrobacteraceae</taxon>
        <taxon>Rubrobacter</taxon>
    </lineage>
</organism>
<comment type="function">
    <text evidence="1">The RuvA-RuvB-RuvC complex processes Holliday junction (HJ) DNA during genetic recombination and DNA repair, while the RuvA-RuvB complex plays an important role in the rescue of blocked DNA replication forks via replication fork reversal (RFR). RuvA specifically binds to HJ cruciform DNA, conferring on it an open structure. The RuvB hexamer acts as an ATP-dependent pump, pulling dsDNA into and through the RuvAB complex. RuvB forms 2 homohexamers on either side of HJ DNA bound by 1 or 2 RuvA tetramers; 4 subunits per hexamer contact DNA at a time. Coordinated motions by a converter formed by DNA-disengaged RuvB subunits stimulates ATP hydrolysis and nucleotide exchange. Immobilization of the converter enables RuvB to convert the ATP-contained energy into a lever motion, pulling 2 nucleotides of DNA out of the RuvA tetramer per ATP hydrolyzed, thus driving DNA branch migration. The RuvB motors rotate together with the DNA substrate, which together with the progressing nucleotide cycle form the mechanistic basis for DNA recombination by continuous HJ branch migration. Branch migration allows RuvC to scan DNA until it finds its consensus sequence, where it cleaves and resolves cruciform DNA.</text>
</comment>
<comment type="catalytic activity">
    <reaction evidence="1">
        <text>ATP + H2O = ADP + phosphate + H(+)</text>
        <dbReference type="Rhea" id="RHEA:13065"/>
        <dbReference type="ChEBI" id="CHEBI:15377"/>
        <dbReference type="ChEBI" id="CHEBI:15378"/>
        <dbReference type="ChEBI" id="CHEBI:30616"/>
        <dbReference type="ChEBI" id="CHEBI:43474"/>
        <dbReference type="ChEBI" id="CHEBI:456216"/>
    </reaction>
</comment>
<comment type="subunit">
    <text evidence="1">Homohexamer. Forms an RuvA(8)-RuvB(12)-Holliday junction (HJ) complex. HJ DNA is sandwiched between 2 RuvA tetramers; dsDNA enters through RuvA and exits via RuvB. An RuvB hexamer assembles on each DNA strand where it exits the tetramer. Each RuvB hexamer is contacted by two RuvA subunits (via domain III) on 2 adjacent RuvB subunits; this complex drives branch migration. In the full resolvosome a probable DNA-RuvA(4)-RuvB(12)-RuvC(2) complex forms which resolves the HJ.</text>
</comment>
<comment type="subcellular location">
    <subcellularLocation>
        <location evidence="1">Cytoplasm</location>
    </subcellularLocation>
</comment>
<comment type="domain">
    <text evidence="1">Has 3 domains, the large (RuvB-L) and small ATPase (RuvB-S) domains and the C-terminal head (RuvB-H) domain. The head domain binds DNA, while the ATPase domains jointly bind ATP, ADP or are empty depending on the state of the subunit in the translocation cycle. During a single DNA translocation step the structure of each domain remains the same, but their relative positions change.</text>
</comment>
<comment type="similarity">
    <text evidence="1">Belongs to the RuvB family.</text>
</comment>
<feature type="chain" id="PRO_0000322838" description="Holliday junction branch migration complex subunit RuvB">
    <location>
        <begin position="1"/>
        <end position="355"/>
    </location>
</feature>
<feature type="region of interest" description="Disordered" evidence="2">
    <location>
        <begin position="1"/>
        <end position="43"/>
    </location>
</feature>
<feature type="region of interest" description="Large ATPase domain (RuvB-L)" evidence="1">
    <location>
        <begin position="4"/>
        <end position="203"/>
    </location>
</feature>
<feature type="region of interest" description="Small ATPAse domain (RuvB-S)" evidence="1">
    <location>
        <begin position="204"/>
        <end position="274"/>
    </location>
</feature>
<feature type="region of interest" description="Head domain (RuvB-H)" evidence="1">
    <location>
        <begin position="277"/>
        <end position="355"/>
    </location>
</feature>
<feature type="compositionally biased region" description="Basic and acidic residues" evidence="2">
    <location>
        <begin position="7"/>
        <end position="17"/>
    </location>
</feature>
<feature type="binding site" evidence="1">
    <location>
        <position position="42"/>
    </location>
    <ligand>
        <name>ATP</name>
        <dbReference type="ChEBI" id="CHEBI:30616"/>
    </ligand>
</feature>
<feature type="binding site" evidence="1">
    <location>
        <position position="43"/>
    </location>
    <ligand>
        <name>ATP</name>
        <dbReference type="ChEBI" id="CHEBI:30616"/>
    </ligand>
</feature>
<feature type="binding site" evidence="1">
    <location>
        <position position="84"/>
    </location>
    <ligand>
        <name>ATP</name>
        <dbReference type="ChEBI" id="CHEBI:30616"/>
    </ligand>
</feature>
<feature type="binding site" evidence="1">
    <location>
        <position position="87"/>
    </location>
    <ligand>
        <name>ATP</name>
        <dbReference type="ChEBI" id="CHEBI:30616"/>
    </ligand>
</feature>
<feature type="binding site" evidence="1">
    <location>
        <position position="88"/>
    </location>
    <ligand>
        <name>ATP</name>
        <dbReference type="ChEBI" id="CHEBI:30616"/>
    </ligand>
</feature>
<feature type="binding site" evidence="1">
    <location>
        <position position="88"/>
    </location>
    <ligand>
        <name>Mg(2+)</name>
        <dbReference type="ChEBI" id="CHEBI:18420"/>
    </ligand>
</feature>
<feature type="binding site" evidence="1">
    <location>
        <position position="89"/>
    </location>
    <ligand>
        <name>ATP</name>
        <dbReference type="ChEBI" id="CHEBI:30616"/>
    </ligand>
</feature>
<feature type="binding site" evidence="1">
    <location>
        <begin position="150"/>
        <end position="152"/>
    </location>
    <ligand>
        <name>ATP</name>
        <dbReference type="ChEBI" id="CHEBI:30616"/>
    </ligand>
</feature>
<feature type="binding site" evidence="1">
    <location>
        <position position="193"/>
    </location>
    <ligand>
        <name>ATP</name>
        <dbReference type="ChEBI" id="CHEBI:30616"/>
    </ligand>
</feature>
<feature type="binding site" evidence="1">
    <location>
        <position position="203"/>
    </location>
    <ligand>
        <name>ATP</name>
        <dbReference type="ChEBI" id="CHEBI:30616"/>
    </ligand>
</feature>
<feature type="binding site" evidence="1">
    <location>
        <position position="240"/>
    </location>
    <ligand>
        <name>ATP</name>
        <dbReference type="ChEBI" id="CHEBI:30616"/>
    </ligand>
</feature>
<feature type="binding site" evidence="1">
    <location>
        <position position="313"/>
    </location>
    <ligand>
        <name>DNA</name>
        <dbReference type="ChEBI" id="CHEBI:16991"/>
    </ligand>
</feature>
<feature type="binding site" evidence="1">
    <location>
        <position position="332"/>
    </location>
    <ligand>
        <name>DNA</name>
        <dbReference type="ChEBI" id="CHEBI:16991"/>
    </ligand>
</feature>
<feature type="binding site" evidence="1">
    <location>
        <position position="337"/>
    </location>
    <ligand>
        <name>DNA</name>
        <dbReference type="ChEBI" id="CHEBI:16991"/>
    </ligand>
</feature>
<gene>
    <name evidence="1" type="primary">ruvB</name>
    <name type="ordered locus">Rxyl_1324</name>
</gene>
<evidence type="ECO:0000255" key="1">
    <source>
        <dbReference type="HAMAP-Rule" id="MF_00016"/>
    </source>
</evidence>
<evidence type="ECO:0000256" key="2">
    <source>
        <dbReference type="SAM" id="MobiDB-lite"/>
    </source>
</evidence>
<protein>
    <recommendedName>
        <fullName evidence="1">Holliday junction branch migration complex subunit RuvB</fullName>
        <ecNumber evidence="1">3.6.4.-</ecNumber>
    </recommendedName>
</protein>